<sequence>MAQAQSPLQWLATTVIRGYQLFISPLMGPRCRFNPTCSHYAIEAIKLHGTAKGSWFALKRILRCHPLHPGGSDPVPPKNDRCNK</sequence>
<comment type="function">
    <text evidence="1">Could be involved in insertion of integral membrane proteins into the membrane.</text>
</comment>
<comment type="subcellular location">
    <subcellularLocation>
        <location evidence="1">Cell inner membrane</location>
        <topology evidence="1">Peripheral membrane protein</topology>
        <orientation evidence="1">Cytoplasmic side</orientation>
    </subcellularLocation>
</comment>
<comment type="similarity">
    <text evidence="1">Belongs to the UPF0161 family.</text>
</comment>
<name>YIDD_SHEDO</name>
<accession>Q12HM7</accession>
<reference key="1">
    <citation type="submission" date="2006-03" db="EMBL/GenBank/DDBJ databases">
        <title>Complete sequence of Shewanella denitrificans OS217.</title>
        <authorList>
            <consortium name="US DOE Joint Genome Institute"/>
            <person name="Copeland A."/>
            <person name="Lucas S."/>
            <person name="Lapidus A."/>
            <person name="Barry K."/>
            <person name="Detter J.C."/>
            <person name="Glavina del Rio T."/>
            <person name="Hammon N."/>
            <person name="Israni S."/>
            <person name="Dalin E."/>
            <person name="Tice H."/>
            <person name="Pitluck S."/>
            <person name="Brettin T."/>
            <person name="Bruce D."/>
            <person name="Han C."/>
            <person name="Tapia R."/>
            <person name="Gilna P."/>
            <person name="Kiss H."/>
            <person name="Schmutz J."/>
            <person name="Larimer F."/>
            <person name="Land M."/>
            <person name="Hauser L."/>
            <person name="Kyrpides N."/>
            <person name="Lykidis A."/>
            <person name="Richardson P."/>
        </authorList>
    </citation>
    <scope>NUCLEOTIDE SEQUENCE [LARGE SCALE GENOMIC DNA]</scope>
    <source>
        <strain>OS217 / ATCC BAA-1090 / DSM 15013</strain>
    </source>
</reference>
<evidence type="ECO:0000255" key="1">
    <source>
        <dbReference type="HAMAP-Rule" id="MF_00386"/>
    </source>
</evidence>
<feature type="chain" id="PRO_1000013125" description="Putative membrane protein insertion efficiency factor">
    <location>
        <begin position="1"/>
        <end position="84"/>
    </location>
</feature>
<proteinExistence type="inferred from homology"/>
<protein>
    <recommendedName>
        <fullName evidence="1">Putative membrane protein insertion efficiency factor</fullName>
    </recommendedName>
</protein>
<dbReference type="EMBL" id="CP000302">
    <property type="protein sequence ID" value="ABE57049.1"/>
    <property type="molecule type" value="Genomic_DNA"/>
</dbReference>
<dbReference type="RefSeq" id="WP_011498187.1">
    <property type="nucleotide sequence ID" value="NC_007954.1"/>
</dbReference>
<dbReference type="STRING" id="318161.Sden_3776"/>
<dbReference type="KEGG" id="sdn:Sden_3776"/>
<dbReference type="eggNOG" id="COG0759">
    <property type="taxonomic scope" value="Bacteria"/>
</dbReference>
<dbReference type="HOGENOM" id="CLU_144811_5_2_6"/>
<dbReference type="OrthoDB" id="9801753at2"/>
<dbReference type="Proteomes" id="UP000001982">
    <property type="component" value="Chromosome"/>
</dbReference>
<dbReference type="GO" id="GO:0005886">
    <property type="term" value="C:plasma membrane"/>
    <property type="evidence" value="ECO:0007669"/>
    <property type="project" value="UniProtKB-SubCell"/>
</dbReference>
<dbReference type="HAMAP" id="MF_00386">
    <property type="entry name" value="UPF0161_YidD"/>
    <property type="match status" value="1"/>
</dbReference>
<dbReference type="InterPro" id="IPR002696">
    <property type="entry name" value="Membr_insert_effic_factor_YidD"/>
</dbReference>
<dbReference type="NCBIfam" id="TIGR00278">
    <property type="entry name" value="membrane protein insertion efficiency factor YidD"/>
    <property type="match status" value="1"/>
</dbReference>
<dbReference type="PANTHER" id="PTHR33383">
    <property type="entry name" value="MEMBRANE PROTEIN INSERTION EFFICIENCY FACTOR-RELATED"/>
    <property type="match status" value="1"/>
</dbReference>
<dbReference type="PANTHER" id="PTHR33383:SF1">
    <property type="entry name" value="MEMBRANE PROTEIN INSERTION EFFICIENCY FACTOR-RELATED"/>
    <property type="match status" value="1"/>
</dbReference>
<dbReference type="Pfam" id="PF01809">
    <property type="entry name" value="YidD"/>
    <property type="match status" value="1"/>
</dbReference>
<dbReference type="SMART" id="SM01234">
    <property type="entry name" value="Haemolytic"/>
    <property type="match status" value="1"/>
</dbReference>
<gene>
    <name type="ordered locus">Sden_3776</name>
</gene>
<keyword id="KW-0997">Cell inner membrane</keyword>
<keyword id="KW-1003">Cell membrane</keyword>
<keyword id="KW-0472">Membrane</keyword>
<keyword id="KW-1185">Reference proteome</keyword>
<organism>
    <name type="scientific">Shewanella denitrificans (strain OS217 / ATCC BAA-1090 / DSM 15013)</name>
    <dbReference type="NCBI Taxonomy" id="318161"/>
    <lineage>
        <taxon>Bacteria</taxon>
        <taxon>Pseudomonadati</taxon>
        <taxon>Pseudomonadota</taxon>
        <taxon>Gammaproteobacteria</taxon>
        <taxon>Alteromonadales</taxon>
        <taxon>Shewanellaceae</taxon>
        <taxon>Shewanella</taxon>
    </lineage>
</organism>